<accession>Q579Z3</accession>
<sequence>MSGLTVSIRGRNGAFAIEAGFAAEGGVTALFGHSGAGKTTLLKMIAGTLRPENGRIAVGDFTLFDAQKGINLPPEKRRIGYVFQDARLFAYMSVKRNLTYARWAGHRPATRSFDEVVALLGIGHLLDRRPSTLSGGERQRVAIGRALLSDPALLLLDEPLSSLDHARRQEILPFIERLRDESHVPIVYVSHEIDEVARLADQIVLLSAGRVTASGAAADIFPLIDAESEGGGVLLEGIVSAYDERYKLAEIDLGGASFQLSDAGLKQTMHVRLRVRARDVSIARKIPEAISIRNLLPVTVTGIERGEGPNAHVFLDFRGRRLGARLTRRSVDDLGLSVGDQVVALVKAVSVDRAAIREK</sequence>
<name>MODC_BRUAB</name>
<dbReference type="EC" id="7.3.2.5" evidence="1"/>
<dbReference type="EMBL" id="AE017224">
    <property type="protein sequence ID" value="AAX75541.1"/>
    <property type="molecule type" value="Genomic_DNA"/>
</dbReference>
<dbReference type="RefSeq" id="WP_002966488.1">
    <property type="nucleotide sequence ID" value="NC_006933.1"/>
</dbReference>
<dbReference type="SMR" id="Q579Z3"/>
<dbReference type="EnsemblBacteria" id="AAX75541">
    <property type="protein sequence ID" value="AAX75541"/>
    <property type="gene ID" value="BruAb2_0090"/>
</dbReference>
<dbReference type="GeneID" id="93015934"/>
<dbReference type="KEGG" id="bmb:BruAb2_0090"/>
<dbReference type="HOGENOM" id="CLU_000604_1_1_5"/>
<dbReference type="Proteomes" id="UP000000540">
    <property type="component" value="Chromosome II"/>
</dbReference>
<dbReference type="GO" id="GO:0005886">
    <property type="term" value="C:plasma membrane"/>
    <property type="evidence" value="ECO:0007669"/>
    <property type="project" value="UniProtKB-SubCell"/>
</dbReference>
<dbReference type="GO" id="GO:0015412">
    <property type="term" value="F:ABC-type molybdate transporter activity"/>
    <property type="evidence" value="ECO:0007669"/>
    <property type="project" value="UniProtKB-EC"/>
</dbReference>
<dbReference type="GO" id="GO:0005524">
    <property type="term" value="F:ATP binding"/>
    <property type="evidence" value="ECO:0007669"/>
    <property type="project" value="UniProtKB-KW"/>
</dbReference>
<dbReference type="GO" id="GO:0016887">
    <property type="term" value="F:ATP hydrolysis activity"/>
    <property type="evidence" value="ECO:0007669"/>
    <property type="project" value="InterPro"/>
</dbReference>
<dbReference type="Gene3D" id="2.40.50.100">
    <property type="match status" value="1"/>
</dbReference>
<dbReference type="Gene3D" id="3.40.50.300">
    <property type="entry name" value="P-loop containing nucleotide triphosphate hydrolases"/>
    <property type="match status" value="1"/>
</dbReference>
<dbReference type="InterPro" id="IPR003593">
    <property type="entry name" value="AAA+_ATPase"/>
</dbReference>
<dbReference type="InterPro" id="IPR003439">
    <property type="entry name" value="ABC_transporter-like_ATP-bd"/>
</dbReference>
<dbReference type="InterPro" id="IPR017871">
    <property type="entry name" value="ABC_transporter-like_CS"/>
</dbReference>
<dbReference type="InterPro" id="IPR008995">
    <property type="entry name" value="Mo/tungstate-bd_C_term_dom"/>
</dbReference>
<dbReference type="InterPro" id="IPR011868">
    <property type="entry name" value="ModC_ABC_ATP-bd"/>
</dbReference>
<dbReference type="InterPro" id="IPR050334">
    <property type="entry name" value="Molybdenum_import_ModC"/>
</dbReference>
<dbReference type="InterPro" id="IPR004606">
    <property type="entry name" value="Mop_domain"/>
</dbReference>
<dbReference type="InterPro" id="IPR027417">
    <property type="entry name" value="P-loop_NTPase"/>
</dbReference>
<dbReference type="InterPro" id="IPR005116">
    <property type="entry name" value="Transp-assoc_OB_typ1"/>
</dbReference>
<dbReference type="NCBIfam" id="TIGR02142">
    <property type="entry name" value="modC_ABC"/>
    <property type="match status" value="1"/>
</dbReference>
<dbReference type="PANTHER" id="PTHR43514">
    <property type="entry name" value="ABC TRANSPORTER I FAMILY MEMBER 10"/>
    <property type="match status" value="1"/>
</dbReference>
<dbReference type="PANTHER" id="PTHR43514:SF4">
    <property type="entry name" value="ABC TRANSPORTER I FAMILY MEMBER 10"/>
    <property type="match status" value="1"/>
</dbReference>
<dbReference type="Pfam" id="PF00005">
    <property type="entry name" value="ABC_tran"/>
    <property type="match status" value="1"/>
</dbReference>
<dbReference type="Pfam" id="PF03459">
    <property type="entry name" value="TOBE"/>
    <property type="match status" value="1"/>
</dbReference>
<dbReference type="SMART" id="SM00382">
    <property type="entry name" value="AAA"/>
    <property type="match status" value="1"/>
</dbReference>
<dbReference type="SUPFAM" id="SSF50331">
    <property type="entry name" value="MOP-like"/>
    <property type="match status" value="1"/>
</dbReference>
<dbReference type="SUPFAM" id="SSF52540">
    <property type="entry name" value="P-loop containing nucleoside triphosphate hydrolases"/>
    <property type="match status" value="1"/>
</dbReference>
<dbReference type="PROSITE" id="PS00211">
    <property type="entry name" value="ABC_TRANSPORTER_1"/>
    <property type="match status" value="1"/>
</dbReference>
<dbReference type="PROSITE" id="PS50893">
    <property type="entry name" value="ABC_TRANSPORTER_2"/>
    <property type="match status" value="1"/>
</dbReference>
<dbReference type="PROSITE" id="PS51241">
    <property type="entry name" value="MODC"/>
    <property type="match status" value="1"/>
</dbReference>
<dbReference type="PROSITE" id="PS51866">
    <property type="entry name" value="MOP"/>
    <property type="match status" value="1"/>
</dbReference>
<keyword id="KW-0067">ATP-binding</keyword>
<keyword id="KW-0997">Cell inner membrane</keyword>
<keyword id="KW-1003">Cell membrane</keyword>
<keyword id="KW-0472">Membrane</keyword>
<keyword id="KW-0500">Molybdenum</keyword>
<keyword id="KW-0547">Nucleotide-binding</keyword>
<keyword id="KW-1278">Translocase</keyword>
<keyword id="KW-0813">Transport</keyword>
<gene>
    <name evidence="1" type="primary">modC</name>
    <name type="ordered locus">BruAb2_0090</name>
</gene>
<proteinExistence type="inferred from homology"/>
<protein>
    <recommendedName>
        <fullName evidence="1">Molybdenum import ATP-binding protein ModC</fullName>
        <ecNumber evidence="1">7.3.2.5</ecNumber>
    </recommendedName>
</protein>
<comment type="function">
    <text evidence="1">Part of the ABC transporter complex ModABC involved in molybdenum import. Responsible for energy coupling to the transport system.</text>
</comment>
<comment type="catalytic activity">
    <reaction evidence="1">
        <text>molybdate(out) + ATP + H2O = molybdate(in) + ADP + phosphate + H(+)</text>
        <dbReference type="Rhea" id="RHEA:22020"/>
        <dbReference type="ChEBI" id="CHEBI:15377"/>
        <dbReference type="ChEBI" id="CHEBI:15378"/>
        <dbReference type="ChEBI" id="CHEBI:30616"/>
        <dbReference type="ChEBI" id="CHEBI:36264"/>
        <dbReference type="ChEBI" id="CHEBI:43474"/>
        <dbReference type="ChEBI" id="CHEBI:456216"/>
        <dbReference type="EC" id="7.3.2.5"/>
    </reaction>
</comment>
<comment type="subunit">
    <text evidence="1">The complex is composed of two ATP-binding proteins (ModC), two transmembrane proteins (ModB) and a solute-binding protein (ModA).</text>
</comment>
<comment type="subcellular location">
    <subcellularLocation>
        <location evidence="1">Cell inner membrane</location>
        <topology evidence="1">Peripheral membrane protein</topology>
    </subcellularLocation>
</comment>
<comment type="similarity">
    <text evidence="1">Belongs to the ABC transporter superfamily. Molybdate importer (TC 3.A.1.8) family.</text>
</comment>
<organism>
    <name type="scientific">Brucella abortus biovar 1 (strain 9-941)</name>
    <dbReference type="NCBI Taxonomy" id="262698"/>
    <lineage>
        <taxon>Bacteria</taxon>
        <taxon>Pseudomonadati</taxon>
        <taxon>Pseudomonadota</taxon>
        <taxon>Alphaproteobacteria</taxon>
        <taxon>Hyphomicrobiales</taxon>
        <taxon>Brucellaceae</taxon>
        <taxon>Brucella/Ochrobactrum group</taxon>
        <taxon>Brucella</taxon>
    </lineage>
</organism>
<reference key="1">
    <citation type="journal article" date="2005" name="J. Bacteriol.">
        <title>Completion of the genome sequence of Brucella abortus and comparison to the highly similar genomes of Brucella melitensis and Brucella suis.</title>
        <authorList>
            <person name="Halling S.M."/>
            <person name="Peterson-Burch B.D."/>
            <person name="Bricker B.J."/>
            <person name="Zuerner R.L."/>
            <person name="Qing Z."/>
            <person name="Li L.-L."/>
            <person name="Kapur V."/>
            <person name="Alt D.P."/>
            <person name="Olsen S.C."/>
        </authorList>
    </citation>
    <scope>NUCLEOTIDE SEQUENCE [LARGE SCALE GENOMIC DNA]</scope>
    <source>
        <strain>9-941</strain>
    </source>
</reference>
<evidence type="ECO:0000255" key="1">
    <source>
        <dbReference type="HAMAP-Rule" id="MF_01705"/>
    </source>
</evidence>
<evidence type="ECO:0000255" key="2">
    <source>
        <dbReference type="PROSITE-ProRule" id="PRU01213"/>
    </source>
</evidence>
<feature type="chain" id="PRO_0000260199" description="Molybdenum import ATP-binding protein ModC">
    <location>
        <begin position="1"/>
        <end position="359"/>
    </location>
</feature>
<feature type="domain" description="ABC transporter" evidence="1">
    <location>
        <begin position="1"/>
        <end position="233"/>
    </location>
</feature>
<feature type="domain" description="Mop" evidence="2">
    <location>
        <begin position="289"/>
        <end position="355"/>
    </location>
</feature>
<feature type="binding site" evidence="1">
    <location>
        <begin position="32"/>
        <end position="39"/>
    </location>
    <ligand>
        <name>ATP</name>
        <dbReference type="ChEBI" id="CHEBI:30616"/>
    </ligand>
</feature>